<feature type="chain" id="PRO_0000126017" description="Small heat shock protein IbpA">
    <location>
        <begin position="1"/>
        <end position="137"/>
    </location>
</feature>
<feature type="domain" description="sHSP" evidence="1">
    <location>
        <begin position="28"/>
        <end position="137"/>
    </location>
</feature>
<reference key="1">
    <citation type="journal article" date="1992" name="J. Bacteriol.">
        <title>Two novel heat shock genes encoding proteins produced in response to heterologous protein expression in Escherichia coli.</title>
        <authorList>
            <person name="Allen S.P."/>
            <person name="Polazzi J.O."/>
            <person name="Gierse J."/>
            <person name="Easton A.M."/>
        </authorList>
    </citation>
    <scope>NUCLEOTIDE SEQUENCE [GENOMIC DNA]</scope>
    <scope>PARTIAL PROTEIN SEQUENCE</scope>
    <source>
        <strain>K12 / W3110 / ATCC 27325 / DSM 5911</strain>
    </source>
</reference>
<reference key="2">
    <citation type="journal article" date="1993" name="Genomics">
        <title>DNA sequence and analysis of 136 kilobases of the Escherichia coli genome: organizational symmetry around the origin of replication.</title>
        <authorList>
            <person name="Burland V.D."/>
            <person name="Plunkett G. III"/>
            <person name="Daniels D.L."/>
            <person name="Blattner F.R."/>
        </authorList>
    </citation>
    <scope>NUCLEOTIDE SEQUENCE [LARGE SCALE GENOMIC DNA]</scope>
    <source>
        <strain>K12 / MG1655 / ATCC 47076</strain>
    </source>
</reference>
<reference key="3">
    <citation type="journal article" date="1997" name="Science">
        <title>The complete genome sequence of Escherichia coli K-12.</title>
        <authorList>
            <person name="Blattner F.R."/>
            <person name="Plunkett G. III"/>
            <person name="Bloch C.A."/>
            <person name="Perna N.T."/>
            <person name="Burland V."/>
            <person name="Riley M."/>
            <person name="Collado-Vides J."/>
            <person name="Glasner J.D."/>
            <person name="Rode C.K."/>
            <person name="Mayhew G.F."/>
            <person name="Gregor J."/>
            <person name="Davis N.W."/>
            <person name="Kirkpatrick H.A."/>
            <person name="Goeden M.A."/>
            <person name="Rose D.J."/>
            <person name="Mau B."/>
            <person name="Shao Y."/>
        </authorList>
    </citation>
    <scope>NUCLEOTIDE SEQUENCE [LARGE SCALE GENOMIC DNA]</scope>
    <source>
        <strain>K12 / MG1655 / ATCC 47076</strain>
    </source>
</reference>
<reference key="4">
    <citation type="journal article" date="2006" name="Mol. Syst. Biol.">
        <title>Highly accurate genome sequences of Escherichia coli K-12 strains MG1655 and W3110.</title>
        <authorList>
            <person name="Hayashi K."/>
            <person name="Morooka N."/>
            <person name="Yamamoto Y."/>
            <person name="Fujita K."/>
            <person name="Isono K."/>
            <person name="Choi S."/>
            <person name="Ohtsubo E."/>
            <person name="Baba T."/>
            <person name="Wanner B.L."/>
            <person name="Mori H."/>
            <person name="Horiuchi T."/>
        </authorList>
    </citation>
    <scope>NUCLEOTIDE SEQUENCE [LARGE SCALE GENOMIC DNA]</scope>
    <source>
        <strain>K12 / W3110 / ATCC 27325 / DSM 5911</strain>
    </source>
</reference>
<reference key="5">
    <citation type="journal article" date="1997" name="Electrophoresis">
        <title>Escherichia coli proteome analysis using the gene-protein database.</title>
        <authorList>
            <person name="VanBogelen R.A."/>
            <person name="Abshire K.Z."/>
            <person name="Moldover B."/>
            <person name="Olson E.R."/>
            <person name="Neidhardt F.C."/>
        </authorList>
    </citation>
    <scope>IDENTIFICATION BY 2D-GEL</scope>
</reference>
<reference key="6">
    <citation type="journal article" date="2000" name="FEMS Microbiol. Lett.">
        <title>Small heat shock proteins, IbpA and IbpB, are involved in resistances to heat and superoxide stresses in Escherichia coli.</title>
        <authorList>
            <person name="Kitagawa M."/>
            <person name="Matsumura Y."/>
            <person name="Tsuchido T."/>
        </authorList>
    </citation>
    <scope>INVOLVEMENT IN RESISTANCE TO OXIDATIVE STRESS</scope>
</reference>
<reference key="7">
    <citation type="journal article" date="2002" name="Microbiology">
        <title>The Escherichia coli small heat-shock proteins IbpA and IbpB prevent the aggregation of endogenous proteins denatured in vivo during extreme heat shock.</title>
        <authorList>
            <person name="Kuczynska-Wisnik D."/>
            <person name="Kedzierska S."/>
            <person name="Matuszewska E."/>
            <person name="Lund P."/>
            <person name="Taylor A."/>
            <person name="Lipinska B."/>
            <person name="Laskowska E."/>
        </authorList>
    </citation>
    <scope>FUNCTION</scope>
</reference>
<reference key="8">
    <citation type="journal article" date="2002" name="Eur. J. Biochem.">
        <title>Escherichia coli small heat shock proteins, IbpA and IbpB, protect enzymes from inactivation by heat and oxidants.</title>
        <authorList>
            <person name="Kitagawa M."/>
            <person name="Miyakawa M."/>
            <person name="Matsumura Y."/>
            <person name="Tsuchido T."/>
        </authorList>
    </citation>
    <scope>FUNCTION</scope>
    <scope>SUBUNIT</scope>
</reference>
<reference key="9">
    <citation type="journal article" date="2003" name="Mol. Microbiol.">
        <title>Small heat shock proteins, ClpB and the DnaK system form a functional triade in reversing protein aggregation.</title>
        <authorList>
            <person name="Mogk A."/>
            <person name="Deuerling E."/>
            <person name="Vorderwuelbecke S."/>
            <person name="Vierling E."/>
            <person name="Bukau B."/>
        </authorList>
    </citation>
    <scope>INTERACTION WITH THE CLPB AND DNAK CHAPERONE SYSTEMS</scope>
</reference>
<reference key="10">
    <citation type="journal article" date="2004" name="Microbiology">
        <title>Aggregation of heat-shock-denatured, endogenous proteins and distribution of the IbpA/B and Fda marker-proteins in Escherichia coli WT and grpE280 cells.</title>
        <authorList>
            <person name="Laskowska E."/>
            <person name="Bohdanowicz J."/>
            <person name="Kuczynska-Wisnik D."/>
            <person name="Matuszewska E."/>
            <person name="Kedzierska S."/>
            <person name="Taylor A."/>
        </authorList>
    </citation>
    <scope>SUBCELLULAR LOCATION</scope>
</reference>
<reference key="11">
    <citation type="journal article" date="2005" name="J. Biol. Chem.">
        <title>The small heat shock protein IbpA of Escherichia coli cooperates with IbpB in stabilization of thermally aggregated proteins in a disaggregation competent state.</title>
        <authorList>
            <person name="Matuszewska M."/>
            <person name="Kuczynska-Wisnik D."/>
            <person name="Laskowska E."/>
            <person name="Liberek K."/>
        </authorList>
    </citation>
    <scope>INTERACTION WITH IBPB</scope>
</reference>
<dbReference type="EMBL" id="M94104">
    <property type="protein sequence ID" value="AAA24424.1"/>
    <property type="molecule type" value="Genomic_DNA"/>
</dbReference>
<dbReference type="EMBL" id="L10328">
    <property type="protein sequence ID" value="AAA62039.1"/>
    <property type="molecule type" value="Genomic_DNA"/>
</dbReference>
<dbReference type="EMBL" id="U00096">
    <property type="protein sequence ID" value="AAC76710.1"/>
    <property type="molecule type" value="Genomic_DNA"/>
</dbReference>
<dbReference type="EMBL" id="AP009048">
    <property type="protein sequence ID" value="BAE77607.1"/>
    <property type="molecule type" value="Genomic_DNA"/>
</dbReference>
<dbReference type="PIR" id="A45245">
    <property type="entry name" value="A45245"/>
</dbReference>
<dbReference type="RefSeq" id="NP_418142.1">
    <property type="nucleotide sequence ID" value="NC_000913.3"/>
</dbReference>
<dbReference type="RefSeq" id="WP_001243437.1">
    <property type="nucleotide sequence ID" value="NZ_STEB01000015.1"/>
</dbReference>
<dbReference type="SMR" id="P0C054"/>
<dbReference type="BioGRID" id="4262590">
    <property type="interactions" value="161"/>
</dbReference>
<dbReference type="DIP" id="DIP-47849N"/>
<dbReference type="FunCoup" id="P0C054">
    <property type="interactions" value="196"/>
</dbReference>
<dbReference type="IntAct" id="P0C054">
    <property type="interactions" value="50"/>
</dbReference>
<dbReference type="MINT" id="P0C054"/>
<dbReference type="STRING" id="511145.b3687"/>
<dbReference type="jPOST" id="P0C054"/>
<dbReference type="PaxDb" id="511145-b3687"/>
<dbReference type="EnsemblBacteria" id="AAC76710">
    <property type="protein sequence ID" value="AAC76710"/>
    <property type="gene ID" value="b3687"/>
</dbReference>
<dbReference type="GeneID" id="93778428"/>
<dbReference type="GeneID" id="948200"/>
<dbReference type="KEGG" id="ecj:JW3664"/>
<dbReference type="KEGG" id="eco:b3687"/>
<dbReference type="KEGG" id="ecoc:C3026_19990"/>
<dbReference type="PATRIC" id="fig|511145.12.peg.3809"/>
<dbReference type="EchoBASE" id="EB1496"/>
<dbReference type="eggNOG" id="COG0071">
    <property type="taxonomic scope" value="Bacteria"/>
</dbReference>
<dbReference type="HOGENOM" id="CLU_046737_4_2_6"/>
<dbReference type="InParanoid" id="P0C054"/>
<dbReference type="OMA" id="TAHDNML"/>
<dbReference type="OrthoDB" id="6871152at2"/>
<dbReference type="PhylomeDB" id="P0C054"/>
<dbReference type="BioCyc" id="EcoCyc:EG11534-MONOMER"/>
<dbReference type="PRO" id="PR:P0C054"/>
<dbReference type="Proteomes" id="UP000000625">
    <property type="component" value="Chromosome"/>
</dbReference>
<dbReference type="GO" id="GO:0005737">
    <property type="term" value="C:cytoplasm"/>
    <property type="evidence" value="ECO:0000318"/>
    <property type="project" value="GO_Central"/>
</dbReference>
<dbReference type="GO" id="GO:0005829">
    <property type="term" value="C:cytosol"/>
    <property type="evidence" value="ECO:0000314"/>
    <property type="project" value="EcoCyc"/>
</dbReference>
<dbReference type="GO" id="GO:0042802">
    <property type="term" value="F:identical protein binding"/>
    <property type="evidence" value="ECO:0000314"/>
    <property type="project" value="EcoCyc"/>
</dbReference>
<dbReference type="GO" id="GO:0048027">
    <property type="term" value="F:mRNA 5'-UTR binding"/>
    <property type="evidence" value="ECO:0000314"/>
    <property type="project" value="EcoCyc"/>
</dbReference>
<dbReference type="GO" id="GO:0042803">
    <property type="term" value="F:protein homodimerization activity"/>
    <property type="evidence" value="ECO:0000314"/>
    <property type="project" value="EcoCyc"/>
</dbReference>
<dbReference type="GO" id="GO:0017148">
    <property type="term" value="P:negative regulation of translation"/>
    <property type="evidence" value="ECO:0000314"/>
    <property type="project" value="EcoCyc"/>
</dbReference>
<dbReference type="GO" id="GO:0050821">
    <property type="term" value="P:protein stabilization"/>
    <property type="evidence" value="ECO:0007669"/>
    <property type="project" value="UniProtKB-UniRule"/>
</dbReference>
<dbReference type="GO" id="GO:0009408">
    <property type="term" value="P:response to heat"/>
    <property type="evidence" value="ECO:0000315"/>
    <property type="project" value="EcoCyc"/>
</dbReference>
<dbReference type="CDD" id="cd06470">
    <property type="entry name" value="ACD_IbpA-B_like"/>
    <property type="match status" value="1"/>
</dbReference>
<dbReference type="FunFam" id="2.60.40.790:FF:000002">
    <property type="entry name" value="Small heat shock protein IbpA"/>
    <property type="match status" value="1"/>
</dbReference>
<dbReference type="Gene3D" id="2.60.40.790">
    <property type="match status" value="1"/>
</dbReference>
<dbReference type="HAMAP" id="MF_02000">
    <property type="entry name" value="HSP20_IbpA"/>
    <property type="match status" value="1"/>
</dbReference>
<dbReference type="InterPro" id="IPR002068">
    <property type="entry name" value="A-crystallin/Hsp20_dom"/>
</dbReference>
<dbReference type="InterPro" id="IPR037913">
    <property type="entry name" value="ACD_IbpA/B"/>
</dbReference>
<dbReference type="InterPro" id="IPR008978">
    <property type="entry name" value="HSP20-like_chaperone"/>
</dbReference>
<dbReference type="InterPro" id="IPR023728">
    <property type="entry name" value="HSP20_IbpA"/>
</dbReference>
<dbReference type="NCBIfam" id="NF008013">
    <property type="entry name" value="PRK10743.1"/>
    <property type="match status" value="1"/>
</dbReference>
<dbReference type="PANTHER" id="PTHR47062">
    <property type="match status" value="1"/>
</dbReference>
<dbReference type="PANTHER" id="PTHR47062:SF1">
    <property type="entry name" value="SMALL HEAT SHOCK PROTEIN IBPA"/>
    <property type="match status" value="1"/>
</dbReference>
<dbReference type="Pfam" id="PF00011">
    <property type="entry name" value="HSP20"/>
    <property type="match status" value="1"/>
</dbReference>
<dbReference type="SUPFAM" id="SSF49764">
    <property type="entry name" value="HSP20-like chaperones"/>
    <property type="match status" value="1"/>
</dbReference>
<dbReference type="PROSITE" id="PS01031">
    <property type="entry name" value="SHSP"/>
    <property type="match status" value="1"/>
</dbReference>
<name>IBPA_ECOLI</name>
<comment type="function">
    <text evidence="2 3">Associates with aggregated proteins, together with IbpB, to stabilize and protect them from irreversible denaturation and extensive proteolysis during heat shock and oxidative stress. Aggregated proteins bound to the IbpAB complex are more efficiently refolded and reactivated by the ATP-dependent chaperone systems ClpB and DnaK/DnaJ/GrpE. Its activity is ATP-independent.</text>
</comment>
<comment type="subunit">
    <text evidence="3">Monomer. Forms homomultimers of about 100-150 subunits at optimal growth temperatures. Conformation changes to monomers at high temperatures or high ionic concentrations.</text>
</comment>
<comment type="interaction">
    <interactant intactId="EBI-550729">
        <id>P0C054</id>
    </interactant>
    <interactant intactId="EBI-550729">
        <id>P0C054</id>
        <label>ibpA</label>
    </interactant>
    <organismsDiffer>false</organismsDiffer>
    <experiments>3</experiments>
</comment>
<comment type="interaction">
    <interactant intactId="EBI-550729">
        <id>P0C054</id>
    </interactant>
    <interactant intactId="EBI-552784">
        <id>P0C058</id>
        <label>ibpB</label>
    </interactant>
    <organismsDiffer>false</organismsDiffer>
    <experiments>5</experiments>
</comment>
<comment type="subcellular location">
    <subcellularLocation>
        <location evidence="4">Cytoplasm</location>
    </subcellularLocation>
</comment>
<comment type="induction">
    <text>By heat shock.</text>
</comment>
<comment type="similarity">
    <text evidence="1 5">Belongs to the small heat shock protein (HSP20) family.</text>
</comment>
<keyword id="KW-0143">Chaperone</keyword>
<keyword id="KW-0963">Cytoplasm</keyword>
<keyword id="KW-0903">Direct protein sequencing</keyword>
<keyword id="KW-1185">Reference proteome</keyword>
<keyword id="KW-0346">Stress response</keyword>
<proteinExistence type="evidence at protein level"/>
<accession>P0C054</accession>
<accession>P29209</accession>
<accession>Q2M7Z9</accession>
<sequence>MRNFDLSPLYRSAIGFDRLFNHLENNQSQSNGGYPPYNVELVDENHYRIAIAVAGFAESELEITAQDNLLVVKGAHADEQKERTYLYQGIAERNFERKFQLAENIHVRGANLVNGLLYIDLERVIPEAKKPRRIEIN</sequence>
<organism>
    <name type="scientific">Escherichia coli (strain K12)</name>
    <dbReference type="NCBI Taxonomy" id="83333"/>
    <lineage>
        <taxon>Bacteria</taxon>
        <taxon>Pseudomonadati</taxon>
        <taxon>Pseudomonadota</taxon>
        <taxon>Gammaproteobacteria</taxon>
        <taxon>Enterobacterales</taxon>
        <taxon>Enterobacteriaceae</taxon>
        <taxon>Escherichia</taxon>
    </lineage>
</organism>
<protein>
    <recommendedName>
        <fullName>Small heat shock protein IbpA</fullName>
    </recommendedName>
    <alternativeName>
        <fullName>16 kDa heat shock protein A</fullName>
    </alternativeName>
</protein>
<gene>
    <name type="primary">ibpA</name>
    <name type="synonym">hslT</name>
    <name type="synonym">htpN</name>
    <name type="ordered locus">b3687</name>
    <name type="ordered locus">JW3664</name>
</gene>
<evidence type="ECO:0000255" key="1">
    <source>
        <dbReference type="PROSITE-ProRule" id="PRU00285"/>
    </source>
</evidence>
<evidence type="ECO:0000269" key="2">
    <source>
    </source>
</evidence>
<evidence type="ECO:0000269" key="3">
    <source>
    </source>
</evidence>
<evidence type="ECO:0000269" key="4">
    <source>
    </source>
</evidence>
<evidence type="ECO:0000305" key="5"/>